<evidence type="ECO:0000255" key="1">
    <source>
        <dbReference type="HAMAP-Rule" id="MF_00091"/>
    </source>
</evidence>
<feature type="chain" id="PRO_0000298003" description="S-ribosylhomocysteine lyase">
    <location>
        <begin position="1"/>
        <end position="157"/>
    </location>
</feature>
<feature type="binding site" evidence="1">
    <location>
        <position position="54"/>
    </location>
    <ligand>
        <name>Fe cation</name>
        <dbReference type="ChEBI" id="CHEBI:24875"/>
    </ligand>
</feature>
<feature type="binding site" evidence="1">
    <location>
        <position position="58"/>
    </location>
    <ligand>
        <name>Fe cation</name>
        <dbReference type="ChEBI" id="CHEBI:24875"/>
    </ligand>
</feature>
<feature type="binding site" evidence="1">
    <location>
        <position position="124"/>
    </location>
    <ligand>
        <name>Fe cation</name>
        <dbReference type="ChEBI" id="CHEBI:24875"/>
    </ligand>
</feature>
<keyword id="KW-0071">Autoinducer synthesis</keyword>
<keyword id="KW-0408">Iron</keyword>
<keyword id="KW-0456">Lyase</keyword>
<keyword id="KW-0479">Metal-binding</keyword>
<keyword id="KW-0673">Quorum sensing</keyword>
<keyword id="KW-1185">Reference proteome</keyword>
<protein>
    <recommendedName>
        <fullName evidence="1">S-ribosylhomocysteine lyase</fullName>
        <ecNumber evidence="1">4.4.1.21</ecNumber>
    </recommendedName>
    <alternativeName>
        <fullName evidence="1">AI-2 synthesis protein</fullName>
    </alternativeName>
    <alternativeName>
        <fullName evidence="1">Autoinducer-2 production protein LuxS</fullName>
    </alternativeName>
</protein>
<comment type="function">
    <text evidence="1">Involved in the synthesis of autoinducer 2 (AI-2) which is secreted by bacteria and is used to communicate both the cell density and the metabolic potential of the environment. The regulation of gene expression in response to changes in cell density is called quorum sensing. Catalyzes the transformation of S-ribosylhomocysteine (RHC) to homocysteine (HC) and 4,5-dihydroxy-2,3-pentadione (DPD).</text>
</comment>
<comment type="catalytic activity">
    <reaction evidence="1">
        <text>S-(5-deoxy-D-ribos-5-yl)-L-homocysteine = (S)-4,5-dihydroxypentane-2,3-dione + L-homocysteine</text>
        <dbReference type="Rhea" id="RHEA:17753"/>
        <dbReference type="ChEBI" id="CHEBI:29484"/>
        <dbReference type="ChEBI" id="CHEBI:58195"/>
        <dbReference type="ChEBI" id="CHEBI:58199"/>
        <dbReference type="EC" id="4.4.1.21"/>
    </reaction>
</comment>
<comment type="cofactor">
    <cofactor evidence="1">
        <name>Fe cation</name>
        <dbReference type="ChEBI" id="CHEBI:24875"/>
    </cofactor>
    <text evidence="1">Binds 1 Fe cation per subunit.</text>
</comment>
<comment type="subunit">
    <text evidence="1">Homodimer.</text>
</comment>
<comment type="similarity">
    <text evidence="1">Belongs to the LuxS family.</text>
</comment>
<gene>
    <name evidence="1" type="primary">luxS</name>
    <name type="ordered locus">LBA1081</name>
</gene>
<sequence>MAKVESFTLDHTKVKAPYVRLITVEEGPKGDKISNYDLRLVQPNENAIPTGGLHTIEHLLASLLRDRLDGVIDCSPFGCRTGFHLIVWGEHSTTEVAKALKSSLEEIRDTITWEDVPGTTIKTCGNYRDHSLFTAKEWCRDILEKGISDDPFERNVI</sequence>
<dbReference type="EC" id="4.4.1.21" evidence="1"/>
<dbReference type="EMBL" id="CP000033">
    <property type="protein sequence ID" value="AAV42926.1"/>
    <property type="molecule type" value="Genomic_DNA"/>
</dbReference>
<dbReference type="RefSeq" id="WP_003547404.1">
    <property type="nucleotide sequence ID" value="NC_006814.3"/>
</dbReference>
<dbReference type="RefSeq" id="YP_193957.1">
    <property type="nucleotide sequence ID" value="NC_006814.3"/>
</dbReference>
<dbReference type="SMR" id="Q5FK48"/>
<dbReference type="STRING" id="272621.LBA1081"/>
<dbReference type="KEGG" id="lac:LBA1081"/>
<dbReference type="PATRIC" id="fig|272621.13.peg.1030"/>
<dbReference type="eggNOG" id="COG1854">
    <property type="taxonomic scope" value="Bacteria"/>
</dbReference>
<dbReference type="HOGENOM" id="CLU_107531_2_1_9"/>
<dbReference type="OrthoDB" id="9788129at2"/>
<dbReference type="BioCyc" id="LACI272621:G1G49-1077-MONOMER"/>
<dbReference type="BRENDA" id="4.4.1.21">
    <property type="organism ID" value="2846"/>
</dbReference>
<dbReference type="Proteomes" id="UP000006381">
    <property type="component" value="Chromosome"/>
</dbReference>
<dbReference type="GO" id="GO:0005506">
    <property type="term" value="F:iron ion binding"/>
    <property type="evidence" value="ECO:0007669"/>
    <property type="project" value="InterPro"/>
</dbReference>
<dbReference type="GO" id="GO:0043768">
    <property type="term" value="F:S-ribosylhomocysteine lyase activity"/>
    <property type="evidence" value="ECO:0007669"/>
    <property type="project" value="UniProtKB-UniRule"/>
</dbReference>
<dbReference type="GO" id="GO:0009372">
    <property type="term" value="P:quorum sensing"/>
    <property type="evidence" value="ECO:0007669"/>
    <property type="project" value="UniProtKB-UniRule"/>
</dbReference>
<dbReference type="Gene3D" id="3.30.1360.80">
    <property type="entry name" value="S-ribosylhomocysteinase (LuxS)"/>
    <property type="match status" value="1"/>
</dbReference>
<dbReference type="HAMAP" id="MF_00091">
    <property type="entry name" value="LuxS"/>
    <property type="match status" value="1"/>
</dbReference>
<dbReference type="InterPro" id="IPR037005">
    <property type="entry name" value="LuxS_sf"/>
</dbReference>
<dbReference type="InterPro" id="IPR011249">
    <property type="entry name" value="Metalloenz_LuxS/M16"/>
</dbReference>
<dbReference type="InterPro" id="IPR003815">
    <property type="entry name" value="S-ribosylhomocysteinase"/>
</dbReference>
<dbReference type="NCBIfam" id="NF002606">
    <property type="entry name" value="PRK02260.2-4"/>
    <property type="match status" value="1"/>
</dbReference>
<dbReference type="NCBIfam" id="NF002608">
    <property type="entry name" value="PRK02260.3-1"/>
    <property type="match status" value="1"/>
</dbReference>
<dbReference type="PANTHER" id="PTHR35799">
    <property type="entry name" value="S-RIBOSYLHOMOCYSTEINE LYASE"/>
    <property type="match status" value="1"/>
</dbReference>
<dbReference type="PANTHER" id="PTHR35799:SF1">
    <property type="entry name" value="S-RIBOSYLHOMOCYSTEINE LYASE"/>
    <property type="match status" value="1"/>
</dbReference>
<dbReference type="Pfam" id="PF02664">
    <property type="entry name" value="LuxS"/>
    <property type="match status" value="1"/>
</dbReference>
<dbReference type="PIRSF" id="PIRSF006160">
    <property type="entry name" value="AI2"/>
    <property type="match status" value="1"/>
</dbReference>
<dbReference type="PRINTS" id="PR01487">
    <property type="entry name" value="LUXSPROTEIN"/>
</dbReference>
<dbReference type="SUPFAM" id="SSF63411">
    <property type="entry name" value="LuxS/MPP-like metallohydrolase"/>
    <property type="match status" value="1"/>
</dbReference>
<accession>Q5FK48</accession>
<proteinExistence type="inferred from homology"/>
<organism>
    <name type="scientific">Lactobacillus acidophilus (strain ATCC 700396 / NCK56 / N2 / NCFM)</name>
    <dbReference type="NCBI Taxonomy" id="272621"/>
    <lineage>
        <taxon>Bacteria</taxon>
        <taxon>Bacillati</taxon>
        <taxon>Bacillota</taxon>
        <taxon>Bacilli</taxon>
        <taxon>Lactobacillales</taxon>
        <taxon>Lactobacillaceae</taxon>
        <taxon>Lactobacillus</taxon>
    </lineage>
</organism>
<name>LUXS_LACAC</name>
<reference key="1">
    <citation type="journal article" date="2005" name="Proc. Natl. Acad. Sci. U.S.A.">
        <title>Complete genome sequence of the probiotic lactic acid bacterium Lactobacillus acidophilus NCFM.</title>
        <authorList>
            <person name="Altermann E."/>
            <person name="Russell W.M."/>
            <person name="Azcarate-Peril M.A."/>
            <person name="Barrangou R."/>
            <person name="Buck B.L."/>
            <person name="McAuliffe O."/>
            <person name="Souther N."/>
            <person name="Dobson A."/>
            <person name="Duong T."/>
            <person name="Callanan M."/>
            <person name="Lick S."/>
            <person name="Hamrick A."/>
            <person name="Cano R."/>
            <person name="Klaenhammer T.R."/>
        </authorList>
    </citation>
    <scope>NUCLEOTIDE SEQUENCE [LARGE SCALE GENOMIC DNA]</scope>
    <source>
        <strain>ATCC 700396 / NCK56 / N2 / NCFM</strain>
    </source>
</reference>